<protein>
    <recommendedName>
        <fullName evidence="1">Glutaminase</fullName>
        <ecNumber evidence="1">3.5.1.2</ecNumber>
    </recommendedName>
</protein>
<organism>
    <name type="scientific">Mycobacterium marinum (strain ATCC BAA-535 / M)</name>
    <dbReference type="NCBI Taxonomy" id="216594"/>
    <lineage>
        <taxon>Bacteria</taxon>
        <taxon>Bacillati</taxon>
        <taxon>Actinomycetota</taxon>
        <taxon>Actinomycetes</taxon>
        <taxon>Mycobacteriales</taxon>
        <taxon>Mycobacteriaceae</taxon>
        <taxon>Mycobacterium</taxon>
        <taxon>Mycobacterium ulcerans group</taxon>
    </lineage>
</organism>
<name>GLSA_MYCMM</name>
<proteinExistence type="inferred from homology"/>
<evidence type="ECO:0000255" key="1">
    <source>
        <dbReference type="HAMAP-Rule" id="MF_00313"/>
    </source>
</evidence>
<reference key="1">
    <citation type="journal article" date="2008" name="Genome Res.">
        <title>Insights from the complete genome sequence of Mycobacterium marinum on the evolution of Mycobacterium tuberculosis.</title>
        <authorList>
            <person name="Stinear T.P."/>
            <person name="Seemann T."/>
            <person name="Harrison P.F."/>
            <person name="Jenkin G.A."/>
            <person name="Davies J.K."/>
            <person name="Johnson P.D."/>
            <person name="Abdellah Z."/>
            <person name="Arrowsmith C."/>
            <person name="Chillingworth T."/>
            <person name="Churcher C."/>
            <person name="Clarke K."/>
            <person name="Cronin A."/>
            <person name="Davis P."/>
            <person name="Goodhead I."/>
            <person name="Holroyd N."/>
            <person name="Jagels K."/>
            <person name="Lord A."/>
            <person name="Moule S."/>
            <person name="Mungall K."/>
            <person name="Norbertczak H."/>
            <person name="Quail M.A."/>
            <person name="Rabbinowitsch E."/>
            <person name="Walker D."/>
            <person name="White B."/>
            <person name="Whitehead S."/>
            <person name="Small P.L."/>
            <person name="Brosch R."/>
            <person name="Ramakrishnan L."/>
            <person name="Fischbach M.A."/>
            <person name="Parkhill J."/>
            <person name="Cole S.T."/>
        </authorList>
    </citation>
    <scope>NUCLEOTIDE SEQUENCE [LARGE SCALE GENOMIC DNA]</scope>
    <source>
        <strain>ATCC BAA-535 / M</strain>
    </source>
</reference>
<accession>B2HGL4</accession>
<gene>
    <name evidence="1" type="primary">glsA</name>
    <name type="ordered locus">MMAR_1548</name>
</gene>
<dbReference type="EC" id="3.5.1.2" evidence="1"/>
<dbReference type="EMBL" id="CP000854">
    <property type="protein sequence ID" value="ACC40000.1"/>
    <property type="molecule type" value="Genomic_DNA"/>
</dbReference>
<dbReference type="RefSeq" id="WP_011741248.1">
    <property type="nucleotide sequence ID" value="NC_010612.1"/>
</dbReference>
<dbReference type="SMR" id="B2HGL4"/>
<dbReference type="STRING" id="216594.MMAR_1548"/>
<dbReference type="GeneID" id="34340252"/>
<dbReference type="GeneID" id="93436124"/>
<dbReference type="KEGG" id="mmi:MMAR_1548"/>
<dbReference type="eggNOG" id="COG2066">
    <property type="taxonomic scope" value="Bacteria"/>
</dbReference>
<dbReference type="HOGENOM" id="CLU_027932_1_0_11"/>
<dbReference type="OrthoDB" id="9788822at2"/>
<dbReference type="Proteomes" id="UP000001190">
    <property type="component" value="Chromosome"/>
</dbReference>
<dbReference type="GO" id="GO:0004359">
    <property type="term" value="F:glutaminase activity"/>
    <property type="evidence" value="ECO:0007669"/>
    <property type="project" value="UniProtKB-UniRule"/>
</dbReference>
<dbReference type="GO" id="GO:0006537">
    <property type="term" value="P:glutamate biosynthetic process"/>
    <property type="evidence" value="ECO:0007669"/>
    <property type="project" value="TreeGrafter"/>
</dbReference>
<dbReference type="GO" id="GO:0006543">
    <property type="term" value="P:glutamine catabolic process"/>
    <property type="evidence" value="ECO:0007669"/>
    <property type="project" value="TreeGrafter"/>
</dbReference>
<dbReference type="Gene3D" id="3.40.710.10">
    <property type="entry name" value="DD-peptidase/beta-lactamase superfamily"/>
    <property type="match status" value="1"/>
</dbReference>
<dbReference type="HAMAP" id="MF_00313">
    <property type="entry name" value="Glutaminase"/>
    <property type="match status" value="1"/>
</dbReference>
<dbReference type="InterPro" id="IPR012338">
    <property type="entry name" value="Beta-lactam/transpept-like"/>
</dbReference>
<dbReference type="InterPro" id="IPR015868">
    <property type="entry name" value="Glutaminase"/>
</dbReference>
<dbReference type="NCBIfam" id="TIGR03814">
    <property type="entry name" value="Gln_ase"/>
    <property type="match status" value="1"/>
</dbReference>
<dbReference type="NCBIfam" id="NF009020">
    <property type="entry name" value="PRK12356.1"/>
    <property type="match status" value="1"/>
</dbReference>
<dbReference type="PANTHER" id="PTHR12544">
    <property type="entry name" value="GLUTAMINASE"/>
    <property type="match status" value="1"/>
</dbReference>
<dbReference type="PANTHER" id="PTHR12544:SF48">
    <property type="entry name" value="GLUTAMINASE 1"/>
    <property type="match status" value="1"/>
</dbReference>
<dbReference type="Pfam" id="PF04960">
    <property type="entry name" value="Glutaminase"/>
    <property type="match status" value="1"/>
</dbReference>
<dbReference type="SUPFAM" id="SSF56601">
    <property type="entry name" value="beta-lactamase/transpeptidase-like"/>
    <property type="match status" value="1"/>
</dbReference>
<comment type="catalytic activity">
    <reaction evidence="1">
        <text>L-glutamine + H2O = L-glutamate + NH4(+)</text>
        <dbReference type="Rhea" id="RHEA:15889"/>
        <dbReference type="ChEBI" id="CHEBI:15377"/>
        <dbReference type="ChEBI" id="CHEBI:28938"/>
        <dbReference type="ChEBI" id="CHEBI:29985"/>
        <dbReference type="ChEBI" id="CHEBI:58359"/>
        <dbReference type="EC" id="3.5.1.2"/>
    </reaction>
</comment>
<comment type="subunit">
    <text evidence="1">Homotetramer.</text>
</comment>
<comment type="similarity">
    <text evidence="1">Belongs to the glutaminase family.</text>
</comment>
<feature type="chain" id="PRO_1000115699" description="Glutaminase">
    <location>
        <begin position="1"/>
        <end position="320"/>
    </location>
</feature>
<feature type="binding site" evidence="1">
    <location>
        <position position="70"/>
    </location>
    <ligand>
        <name>substrate</name>
    </ligand>
</feature>
<feature type="binding site" evidence="1">
    <location>
        <position position="121"/>
    </location>
    <ligand>
        <name>substrate</name>
    </ligand>
</feature>
<feature type="binding site" evidence="1">
    <location>
        <position position="165"/>
    </location>
    <ligand>
        <name>substrate</name>
    </ligand>
</feature>
<feature type="binding site" evidence="1">
    <location>
        <position position="172"/>
    </location>
    <ligand>
        <name>substrate</name>
    </ligand>
</feature>
<feature type="binding site" evidence="1">
    <location>
        <position position="196"/>
    </location>
    <ligand>
        <name>substrate</name>
    </ligand>
</feature>
<feature type="binding site" evidence="1">
    <location>
        <position position="248"/>
    </location>
    <ligand>
        <name>substrate</name>
    </ligand>
</feature>
<feature type="binding site" evidence="1">
    <location>
        <position position="266"/>
    </location>
    <ligand>
        <name>substrate</name>
    </ligand>
</feature>
<sequence>MAPTSVSNARIEKAVLDAHEKQKNKHGGKNADYIPILAQVPSTLFGVSVATVDGQVFTAGDAGYEFALESISKIFTLALVIEQRGPRELRLKVGADPTGEAFNSVLALELHNDKPMSPLVNAGAISTTSLVDAVGPEDRWRQIVGAQSDFAGRQISISEEINASEQATNFHNRAIAWLLRGSGYIYCDPMEACDIYTRQCSTLVTTADLAVMGATLANGGTNPITGKRVIARKNVPHVLAEMTMEGVYTRSGDWAYTVGLPAKSGVGGGLVAVAPGQLAIAAFSPPLDKVGNSVRAQAAVAQIADTLQLGLFNVPGEEDE</sequence>
<keyword id="KW-0378">Hydrolase</keyword>
<keyword id="KW-1185">Reference proteome</keyword>